<dbReference type="EC" id="4.2.1.33"/>
<dbReference type="EMBL" id="U00096">
    <property type="protein sequence ID" value="AAC73182.1"/>
    <property type="molecule type" value="Genomic_DNA"/>
</dbReference>
<dbReference type="EMBL" id="AP009048">
    <property type="protein sequence ID" value="BAB96640.1"/>
    <property type="molecule type" value="Genomic_DNA"/>
</dbReference>
<dbReference type="PIR" id="S40585">
    <property type="entry name" value="S40585"/>
</dbReference>
<dbReference type="RefSeq" id="NP_414613.1">
    <property type="nucleotide sequence ID" value="NC_000913.3"/>
</dbReference>
<dbReference type="RefSeq" id="WP_000818228.1">
    <property type="nucleotide sequence ID" value="NZ_STEB01000010.1"/>
</dbReference>
<dbReference type="SMR" id="P30126"/>
<dbReference type="BioGRID" id="4262049">
    <property type="interactions" value="8"/>
</dbReference>
<dbReference type="BioGRID" id="850014">
    <property type="interactions" value="3"/>
</dbReference>
<dbReference type="ComplexPortal" id="CPX-5159">
    <property type="entry name" value="3-isopropylmalate dehydratase complex"/>
</dbReference>
<dbReference type="DIP" id="DIP-10092N"/>
<dbReference type="FunCoup" id="P30126">
    <property type="interactions" value="722"/>
</dbReference>
<dbReference type="IntAct" id="P30126">
    <property type="interactions" value="8"/>
</dbReference>
<dbReference type="STRING" id="511145.b0071"/>
<dbReference type="jPOST" id="P30126"/>
<dbReference type="PaxDb" id="511145-b0071"/>
<dbReference type="EnsemblBacteria" id="AAC73182">
    <property type="protein sequence ID" value="AAC73182"/>
    <property type="gene ID" value="b0071"/>
</dbReference>
<dbReference type="GeneID" id="93777364"/>
<dbReference type="GeneID" id="945642"/>
<dbReference type="KEGG" id="ecj:JW0070"/>
<dbReference type="KEGG" id="eco:b0071"/>
<dbReference type="PATRIC" id="fig|1411691.4.peg.2210"/>
<dbReference type="EchoBASE" id="EB1535"/>
<dbReference type="eggNOG" id="COG0066">
    <property type="taxonomic scope" value="Bacteria"/>
</dbReference>
<dbReference type="HOGENOM" id="CLU_081378_0_3_6"/>
<dbReference type="InParanoid" id="P30126"/>
<dbReference type="OMA" id="FGQHLFH"/>
<dbReference type="OrthoDB" id="9777465at2"/>
<dbReference type="PhylomeDB" id="P30126"/>
<dbReference type="BioCyc" id="EcoCyc:LEUD-MONOMER"/>
<dbReference type="BioCyc" id="MetaCyc:LEUD-MONOMER"/>
<dbReference type="UniPathway" id="UPA00048">
    <property type="reaction ID" value="UER00071"/>
</dbReference>
<dbReference type="PRO" id="PR:P30126"/>
<dbReference type="Proteomes" id="UP000000625">
    <property type="component" value="Chromosome"/>
</dbReference>
<dbReference type="GO" id="GO:0009316">
    <property type="term" value="C:3-isopropylmalate dehydratase complex"/>
    <property type="evidence" value="ECO:0000315"/>
    <property type="project" value="EcoliWiki"/>
</dbReference>
<dbReference type="GO" id="GO:0005829">
    <property type="term" value="C:cytosol"/>
    <property type="evidence" value="ECO:0000314"/>
    <property type="project" value="EcoCyc"/>
</dbReference>
<dbReference type="GO" id="GO:0003861">
    <property type="term" value="F:3-isopropylmalate dehydratase activity"/>
    <property type="evidence" value="ECO:0007669"/>
    <property type="project" value="UniProtKB-UniRule"/>
</dbReference>
<dbReference type="GO" id="GO:0009098">
    <property type="term" value="P:L-leucine biosynthetic process"/>
    <property type="evidence" value="ECO:0000315"/>
    <property type="project" value="EcoCyc"/>
</dbReference>
<dbReference type="CDD" id="cd01577">
    <property type="entry name" value="IPMI_Swivel"/>
    <property type="match status" value="1"/>
</dbReference>
<dbReference type="FunFam" id="3.20.19.10:FF:000003">
    <property type="entry name" value="3-isopropylmalate dehydratase small subunit"/>
    <property type="match status" value="1"/>
</dbReference>
<dbReference type="Gene3D" id="3.20.19.10">
    <property type="entry name" value="Aconitase, domain 4"/>
    <property type="match status" value="1"/>
</dbReference>
<dbReference type="HAMAP" id="MF_01031">
    <property type="entry name" value="LeuD_type1"/>
    <property type="match status" value="1"/>
</dbReference>
<dbReference type="InterPro" id="IPR004431">
    <property type="entry name" value="3-IsopropMal_deHydase_ssu"/>
</dbReference>
<dbReference type="InterPro" id="IPR015928">
    <property type="entry name" value="Aconitase/3IPM_dehydase_swvl"/>
</dbReference>
<dbReference type="InterPro" id="IPR000573">
    <property type="entry name" value="AconitaseA/IPMdHydase_ssu_swvl"/>
</dbReference>
<dbReference type="InterPro" id="IPR033940">
    <property type="entry name" value="IPMI_Swivel"/>
</dbReference>
<dbReference type="InterPro" id="IPR050075">
    <property type="entry name" value="LeuD"/>
</dbReference>
<dbReference type="NCBIfam" id="TIGR00171">
    <property type="entry name" value="leuD"/>
    <property type="match status" value="1"/>
</dbReference>
<dbReference type="NCBIfam" id="NF002458">
    <property type="entry name" value="PRK01641.1"/>
    <property type="match status" value="1"/>
</dbReference>
<dbReference type="PANTHER" id="PTHR43345:SF5">
    <property type="entry name" value="3-ISOPROPYLMALATE DEHYDRATASE SMALL SUBUNIT"/>
    <property type="match status" value="1"/>
</dbReference>
<dbReference type="PANTHER" id="PTHR43345">
    <property type="entry name" value="3-ISOPROPYLMALATE DEHYDRATASE SMALL SUBUNIT 2-RELATED-RELATED"/>
    <property type="match status" value="1"/>
</dbReference>
<dbReference type="Pfam" id="PF00694">
    <property type="entry name" value="Aconitase_C"/>
    <property type="match status" value="1"/>
</dbReference>
<dbReference type="SUPFAM" id="SSF52016">
    <property type="entry name" value="LeuD/IlvD-like"/>
    <property type="match status" value="1"/>
</dbReference>
<comment type="function">
    <text>Catalyzes the isomerization between 2-isopropylmalate and 3-isopropylmalate, via the formation of 2-isopropylmaleate.</text>
</comment>
<comment type="catalytic activity">
    <reaction>
        <text>(2R,3S)-3-isopropylmalate = (2S)-2-isopropylmalate</text>
        <dbReference type="Rhea" id="RHEA:32287"/>
        <dbReference type="ChEBI" id="CHEBI:1178"/>
        <dbReference type="ChEBI" id="CHEBI:35121"/>
        <dbReference type="EC" id="4.2.1.33"/>
    </reaction>
</comment>
<comment type="pathway">
    <text>Amino-acid biosynthesis; L-leucine biosynthesis; L-leucine from 3-methyl-2-oxobutanoate: step 2/4.</text>
</comment>
<comment type="subunit">
    <text evidence="1">Heterodimer of LeuC and LeuD.</text>
</comment>
<comment type="interaction">
    <interactant intactId="EBI-1113528">
        <id>P30126</id>
    </interactant>
    <interactant intactId="EBI-1113576">
        <id>P0A6A6</id>
        <label>leuC</label>
    </interactant>
    <organismsDiffer>false</organismsDiffer>
    <experiments>4</experiments>
</comment>
<comment type="similarity">
    <text evidence="3">Belongs to the LeuD family. LeuD type 1 subfamily.</text>
</comment>
<reference key="1">
    <citation type="journal article" date="1992" name="Nucleic Acids Res.">
        <title>Systematic sequencing of the Escherichia coli genome: analysis of the 0-2.4 min region.</title>
        <authorList>
            <person name="Yura T."/>
            <person name="Mori H."/>
            <person name="Nagai H."/>
            <person name="Nagata T."/>
            <person name="Ishihama A."/>
            <person name="Fujita N."/>
            <person name="Isono K."/>
            <person name="Mizobuchi K."/>
            <person name="Nakata A."/>
        </authorList>
    </citation>
    <scope>NUCLEOTIDE SEQUENCE [LARGE SCALE GENOMIC DNA]</scope>
    <source>
        <strain>K12</strain>
    </source>
</reference>
<reference key="2">
    <citation type="journal article" date="1997" name="Science">
        <title>The complete genome sequence of Escherichia coli K-12.</title>
        <authorList>
            <person name="Blattner F.R."/>
            <person name="Plunkett G. III"/>
            <person name="Bloch C.A."/>
            <person name="Perna N.T."/>
            <person name="Burland V."/>
            <person name="Riley M."/>
            <person name="Collado-Vides J."/>
            <person name="Glasner J.D."/>
            <person name="Rode C.K."/>
            <person name="Mayhew G.F."/>
            <person name="Gregor J."/>
            <person name="Davis N.W."/>
            <person name="Kirkpatrick H.A."/>
            <person name="Goeden M.A."/>
            <person name="Rose D.J."/>
            <person name="Mau B."/>
            <person name="Shao Y."/>
        </authorList>
    </citation>
    <scope>NUCLEOTIDE SEQUENCE [LARGE SCALE GENOMIC DNA]</scope>
    <source>
        <strain>K12 / MG1655 / ATCC 47076</strain>
    </source>
</reference>
<reference key="3">
    <citation type="journal article" date="2006" name="Mol. Syst. Biol.">
        <title>Highly accurate genome sequences of Escherichia coli K-12 strains MG1655 and W3110.</title>
        <authorList>
            <person name="Hayashi K."/>
            <person name="Morooka N."/>
            <person name="Yamamoto Y."/>
            <person name="Fujita K."/>
            <person name="Isono K."/>
            <person name="Choi S."/>
            <person name="Ohtsubo E."/>
            <person name="Baba T."/>
            <person name="Wanner B.L."/>
            <person name="Mori H."/>
            <person name="Horiuchi T."/>
        </authorList>
    </citation>
    <scope>NUCLEOTIDE SEQUENCE [LARGE SCALE GENOMIC DNA]</scope>
    <source>
        <strain>K12 / W3110 / ATCC 27325 / DSM 5911</strain>
    </source>
</reference>
<reference key="4">
    <citation type="journal article" date="1998" name="J. Mol. Biol.">
        <title>Protein identification with N and C-terminal sequence tags in proteome projects.</title>
        <authorList>
            <person name="Wilkins M.R."/>
            <person name="Gasteiger E."/>
            <person name="Tonella L."/>
            <person name="Ou K."/>
            <person name="Tyler M."/>
            <person name="Sanchez J.-C."/>
            <person name="Gooley A.A."/>
            <person name="Walsh B.J."/>
            <person name="Bairoch A."/>
            <person name="Appel R.D."/>
            <person name="Williams K.L."/>
            <person name="Hochstrasser D.F."/>
        </authorList>
    </citation>
    <scope>PROTEIN SEQUENCE OF 2-5</scope>
    <source>
        <strain>K12 / W3110 / ATCC 27325 / DSM 5911</strain>
    </source>
</reference>
<gene>
    <name type="primary">leuD</name>
    <name type="ordered locus">b0071</name>
    <name type="ordered locus">JW0070</name>
</gene>
<proteinExistence type="evidence at protein level"/>
<keyword id="KW-0028">Amino-acid biosynthesis</keyword>
<keyword id="KW-0100">Branched-chain amino acid biosynthesis</keyword>
<keyword id="KW-0903">Direct protein sequencing</keyword>
<keyword id="KW-0432">Leucine biosynthesis</keyword>
<keyword id="KW-0456">Lyase</keyword>
<keyword id="KW-1185">Reference proteome</keyword>
<feature type="initiator methionine" description="Removed" evidence="2">
    <location>
        <position position="1"/>
    </location>
</feature>
<feature type="chain" id="PRO_0000141819" description="3-isopropylmalate dehydratase small subunit">
    <location>
        <begin position="2"/>
        <end position="201"/>
    </location>
</feature>
<evidence type="ECO:0000250" key="1"/>
<evidence type="ECO:0000269" key="2">
    <source>
    </source>
</evidence>
<evidence type="ECO:0000305" key="3"/>
<protein>
    <recommendedName>
        <fullName>3-isopropylmalate dehydratase small subunit</fullName>
        <ecNumber>4.2.1.33</ecNumber>
    </recommendedName>
    <alternativeName>
        <fullName>Alpha-IPM isomerase</fullName>
        <shortName>IPMI</shortName>
    </alternativeName>
    <alternativeName>
        <fullName>Isopropylmalate isomerase</fullName>
    </alternativeName>
</protein>
<accession>P30126</accession>
<sequence length="201" mass="22487">MAEKFIKHTGLVVPLDAANVDTDAIIPKQFLQKVTRTGFGAHLFNDWRFLDEKGQQPNPDFVLNFPQYQGASILLARENFGCGSSREHAPWALTDYGFKVVIAPSFADIFYGNSFNNQLLPVKLSDAEVDELFALVKANPGIHFDVDLEAQEVKAGEKTYRFTIDAFRRHCMMNGLDSIGLTLQHDDAIAAYEAKQPAFMN</sequence>
<organism>
    <name type="scientific">Escherichia coli (strain K12)</name>
    <dbReference type="NCBI Taxonomy" id="83333"/>
    <lineage>
        <taxon>Bacteria</taxon>
        <taxon>Pseudomonadati</taxon>
        <taxon>Pseudomonadota</taxon>
        <taxon>Gammaproteobacteria</taxon>
        <taxon>Enterobacterales</taxon>
        <taxon>Enterobacteriaceae</taxon>
        <taxon>Escherichia</taxon>
    </lineage>
</organism>
<name>LEUD_ECOLI</name>